<evidence type="ECO:0000255" key="1">
    <source>
        <dbReference type="HAMAP-Rule" id="MF_00444"/>
    </source>
</evidence>
<dbReference type="EC" id="3.4.21.92" evidence="1"/>
<dbReference type="EMBL" id="CP000148">
    <property type="protein sequence ID" value="ABB32102.1"/>
    <property type="molecule type" value="Genomic_DNA"/>
</dbReference>
<dbReference type="RefSeq" id="WP_004511972.1">
    <property type="nucleotide sequence ID" value="NC_007517.1"/>
</dbReference>
<dbReference type="SMR" id="Q39UH2"/>
<dbReference type="STRING" id="269799.Gmet_1873"/>
<dbReference type="MEROPS" id="S14.001"/>
<dbReference type="KEGG" id="gme:Gmet_1873"/>
<dbReference type="eggNOG" id="COG0740">
    <property type="taxonomic scope" value="Bacteria"/>
</dbReference>
<dbReference type="HOGENOM" id="CLU_058707_3_2_7"/>
<dbReference type="Proteomes" id="UP000007073">
    <property type="component" value="Chromosome"/>
</dbReference>
<dbReference type="GO" id="GO:0005737">
    <property type="term" value="C:cytoplasm"/>
    <property type="evidence" value="ECO:0007669"/>
    <property type="project" value="UniProtKB-SubCell"/>
</dbReference>
<dbReference type="GO" id="GO:0009368">
    <property type="term" value="C:endopeptidase Clp complex"/>
    <property type="evidence" value="ECO:0007669"/>
    <property type="project" value="TreeGrafter"/>
</dbReference>
<dbReference type="GO" id="GO:0004176">
    <property type="term" value="F:ATP-dependent peptidase activity"/>
    <property type="evidence" value="ECO:0007669"/>
    <property type="project" value="InterPro"/>
</dbReference>
<dbReference type="GO" id="GO:0051117">
    <property type="term" value="F:ATPase binding"/>
    <property type="evidence" value="ECO:0007669"/>
    <property type="project" value="TreeGrafter"/>
</dbReference>
<dbReference type="GO" id="GO:0004252">
    <property type="term" value="F:serine-type endopeptidase activity"/>
    <property type="evidence" value="ECO:0007669"/>
    <property type="project" value="UniProtKB-UniRule"/>
</dbReference>
<dbReference type="GO" id="GO:0006515">
    <property type="term" value="P:protein quality control for misfolded or incompletely synthesized proteins"/>
    <property type="evidence" value="ECO:0007669"/>
    <property type="project" value="TreeGrafter"/>
</dbReference>
<dbReference type="CDD" id="cd07017">
    <property type="entry name" value="S14_ClpP_2"/>
    <property type="match status" value="1"/>
</dbReference>
<dbReference type="FunFam" id="3.90.226.10:FF:000001">
    <property type="entry name" value="ATP-dependent Clp protease proteolytic subunit"/>
    <property type="match status" value="1"/>
</dbReference>
<dbReference type="Gene3D" id="3.90.226.10">
    <property type="entry name" value="2-enoyl-CoA Hydratase, Chain A, domain 1"/>
    <property type="match status" value="1"/>
</dbReference>
<dbReference type="HAMAP" id="MF_00444">
    <property type="entry name" value="ClpP"/>
    <property type="match status" value="1"/>
</dbReference>
<dbReference type="InterPro" id="IPR001907">
    <property type="entry name" value="ClpP"/>
</dbReference>
<dbReference type="InterPro" id="IPR029045">
    <property type="entry name" value="ClpP/crotonase-like_dom_sf"/>
</dbReference>
<dbReference type="InterPro" id="IPR023562">
    <property type="entry name" value="ClpP/TepA"/>
</dbReference>
<dbReference type="InterPro" id="IPR018215">
    <property type="entry name" value="ClpP_Ser_AS"/>
</dbReference>
<dbReference type="NCBIfam" id="TIGR00493">
    <property type="entry name" value="clpP"/>
    <property type="match status" value="1"/>
</dbReference>
<dbReference type="NCBIfam" id="NF001368">
    <property type="entry name" value="PRK00277.1"/>
    <property type="match status" value="1"/>
</dbReference>
<dbReference type="NCBIfam" id="NF009205">
    <property type="entry name" value="PRK12553.1"/>
    <property type="match status" value="1"/>
</dbReference>
<dbReference type="PANTHER" id="PTHR10381">
    <property type="entry name" value="ATP-DEPENDENT CLP PROTEASE PROTEOLYTIC SUBUNIT"/>
    <property type="match status" value="1"/>
</dbReference>
<dbReference type="PANTHER" id="PTHR10381:SF70">
    <property type="entry name" value="ATP-DEPENDENT CLP PROTEASE PROTEOLYTIC SUBUNIT"/>
    <property type="match status" value="1"/>
</dbReference>
<dbReference type="Pfam" id="PF00574">
    <property type="entry name" value="CLP_protease"/>
    <property type="match status" value="1"/>
</dbReference>
<dbReference type="PRINTS" id="PR00127">
    <property type="entry name" value="CLPPROTEASEP"/>
</dbReference>
<dbReference type="SUPFAM" id="SSF52096">
    <property type="entry name" value="ClpP/crotonase"/>
    <property type="match status" value="1"/>
</dbReference>
<dbReference type="PROSITE" id="PS00381">
    <property type="entry name" value="CLP_PROTEASE_SER"/>
    <property type="match status" value="1"/>
</dbReference>
<organism>
    <name type="scientific">Geobacter metallireducens (strain ATCC 53774 / DSM 7210 / GS-15)</name>
    <dbReference type="NCBI Taxonomy" id="269799"/>
    <lineage>
        <taxon>Bacteria</taxon>
        <taxon>Pseudomonadati</taxon>
        <taxon>Thermodesulfobacteriota</taxon>
        <taxon>Desulfuromonadia</taxon>
        <taxon>Geobacterales</taxon>
        <taxon>Geobacteraceae</taxon>
        <taxon>Geobacter</taxon>
    </lineage>
</organism>
<sequence>MLVPIVVEQTGRGERSYDIYSRLLKDRIIFLGGPIDDHVANLVIAQLLFLEAEDPDKDIHLYINSPGGVVTAGMAIYDTMQYIKAPVSTICVGQAASMGALLLSGGEKGKRFSLTHSRIMIHQPLGGFQGQATDIHIHAQEILKMKKRLNEIIAENSGQALEKVEADTERDYFMSGEEAKSYGIIDAIIARKPTSGGSR</sequence>
<name>CLPP_GEOMG</name>
<gene>
    <name evidence="1" type="primary">clpP</name>
    <name type="ordered locus">Gmet_1873</name>
</gene>
<reference key="1">
    <citation type="journal article" date="2009" name="BMC Microbiol.">
        <title>The genome sequence of Geobacter metallireducens: features of metabolism, physiology and regulation common and dissimilar to Geobacter sulfurreducens.</title>
        <authorList>
            <person name="Aklujkar M."/>
            <person name="Krushkal J."/>
            <person name="DiBartolo G."/>
            <person name="Lapidus A."/>
            <person name="Land M.L."/>
            <person name="Lovley D.R."/>
        </authorList>
    </citation>
    <scope>NUCLEOTIDE SEQUENCE [LARGE SCALE GENOMIC DNA]</scope>
    <source>
        <strain>ATCC 53774 / DSM 7210 / GS-15</strain>
    </source>
</reference>
<accession>Q39UH2</accession>
<feature type="chain" id="PRO_0000226448" description="ATP-dependent Clp protease proteolytic subunit">
    <location>
        <begin position="1"/>
        <end position="199"/>
    </location>
</feature>
<feature type="active site" description="Nucleophile" evidence="1">
    <location>
        <position position="97"/>
    </location>
</feature>
<feature type="active site" evidence="1">
    <location>
        <position position="122"/>
    </location>
</feature>
<proteinExistence type="inferred from homology"/>
<protein>
    <recommendedName>
        <fullName evidence="1">ATP-dependent Clp protease proteolytic subunit</fullName>
        <ecNumber evidence="1">3.4.21.92</ecNumber>
    </recommendedName>
    <alternativeName>
        <fullName evidence="1">Endopeptidase Clp</fullName>
    </alternativeName>
</protein>
<keyword id="KW-0963">Cytoplasm</keyword>
<keyword id="KW-0378">Hydrolase</keyword>
<keyword id="KW-0645">Protease</keyword>
<keyword id="KW-1185">Reference proteome</keyword>
<keyword id="KW-0720">Serine protease</keyword>
<comment type="function">
    <text evidence="1">Cleaves peptides in various proteins in a process that requires ATP hydrolysis. Has a chymotrypsin-like activity. Plays a major role in the degradation of misfolded proteins.</text>
</comment>
<comment type="catalytic activity">
    <reaction evidence="1">
        <text>Hydrolysis of proteins to small peptides in the presence of ATP and magnesium. alpha-casein is the usual test substrate. In the absence of ATP, only oligopeptides shorter than five residues are hydrolyzed (such as succinyl-Leu-Tyr-|-NHMec, and Leu-Tyr-Leu-|-Tyr-Trp, in which cleavage of the -Tyr-|-Leu- and -Tyr-|-Trp bonds also occurs).</text>
        <dbReference type="EC" id="3.4.21.92"/>
    </reaction>
</comment>
<comment type="subunit">
    <text evidence="1">Fourteen ClpP subunits assemble into 2 heptameric rings which stack back to back to give a disk-like structure with a central cavity, resembling the structure of eukaryotic proteasomes.</text>
</comment>
<comment type="subcellular location">
    <subcellularLocation>
        <location evidence="1">Cytoplasm</location>
    </subcellularLocation>
</comment>
<comment type="similarity">
    <text evidence="1">Belongs to the peptidase S14 family.</text>
</comment>